<name>RNPH_SALG2</name>
<protein>
    <recommendedName>
        <fullName evidence="1">Ribonuclease PH</fullName>
        <shortName evidence="1">RNase PH</shortName>
        <ecNumber evidence="1">2.7.7.56</ecNumber>
    </recommendedName>
    <alternativeName>
        <fullName evidence="1">tRNA nucleotidyltransferase</fullName>
    </alternativeName>
</protein>
<comment type="function">
    <text evidence="1">Phosphorolytic 3'-5' exoribonuclease that plays an important role in tRNA 3'-end maturation. Removes nucleotide residues following the 3'-CCA terminus of tRNAs; can also add nucleotides to the ends of RNA molecules by using nucleoside diphosphates as substrates, but this may not be physiologically important. Probably plays a role in initiation of 16S rRNA degradation (leading to ribosome degradation) during starvation.</text>
</comment>
<comment type="catalytic activity">
    <reaction evidence="1">
        <text>tRNA(n+1) + phosphate = tRNA(n) + a ribonucleoside 5'-diphosphate</text>
        <dbReference type="Rhea" id="RHEA:10628"/>
        <dbReference type="Rhea" id="RHEA-COMP:17343"/>
        <dbReference type="Rhea" id="RHEA-COMP:17344"/>
        <dbReference type="ChEBI" id="CHEBI:43474"/>
        <dbReference type="ChEBI" id="CHEBI:57930"/>
        <dbReference type="ChEBI" id="CHEBI:173114"/>
        <dbReference type="EC" id="2.7.7.56"/>
    </reaction>
</comment>
<comment type="subunit">
    <text evidence="1">Homohexameric ring arranged as a trimer of dimers.</text>
</comment>
<comment type="similarity">
    <text evidence="1">Belongs to the RNase PH family.</text>
</comment>
<reference key="1">
    <citation type="journal article" date="2008" name="Genome Res.">
        <title>Comparative genome analysis of Salmonella enteritidis PT4 and Salmonella gallinarum 287/91 provides insights into evolutionary and host adaptation pathways.</title>
        <authorList>
            <person name="Thomson N.R."/>
            <person name="Clayton D.J."/>
            <person name="Windhorst D."/>
            <person name="Vernikos G."/>
            <person name="Davidson S."/>
            <person name="Churcher C."/>
            <person name="Quail M.A."/>
            <person name="Stevens M."/>
            <person name="Jones M.A."/>
            <person name="Watson M."/>
            <person name="Barron A."/>
            <person name="Layton A."/>
            <person name="Pickard D."/>
            <person name="Kingsley R.A."/>
            <person name="Bignell A."/>
            <person name="Clark L."/>
            <person name="Harris B."/>
            <person name="Ormond D."/>
            <person name="Abdellah Z."/>
            <person name="Brooks K."/>
            <person name="Cherevach I."/>
            <person name="Chillingworth T."/>
            <person name="Woodward J."/>
            <person name="Norberczak H."/>
            <person name="Lord A."/>
            <person name="Arrowsmith C."/>
            <person name="Jagels K."/>
            <person name="Moule S."/>
            <person name="Mungall K."/>
            <person name="Saunders M."/>
            <person name="Whitehead S."/>
            <person name="Chabalgoity J.A."/>
            <person name="Maskell D."/>
            <person name="Humphreys T."/>
            <person name="Roberts M."/>
            <person name="Barrow P.A."/>
            <person name="Dougan G."/>
            <person name="Parkhill J."/>
        </authorList>
    </citation>
    <scope>NUCLEOTIDE SEQUENCE [LARGE SCALE GENOMIC DNA]</scope>
    <source>
        <strain>287/91 / NCTC 13346</strain>
    </source>
</reference>
<evidence type="ECO:0000255" key="1">
    <source>
        <dbReference type="HAMAP-Rule" id="MF_00564"/>
    </source>
</evidence>
<gene>
    <name evidence="1" type="primary">rph</name>
    <name type="ordered locus">SG3697</name>
</gene>
<proteinExistence type="inferred from homology"/>
<sequence length="238" mass="25285">MRPAGRSANQVRPVTLTRNYTKHAEGSVLVEFGDTKVLCTASIEEGVPRFLKGQGQGWITAEYGMLPRATHTRNAREAAKGKQGGRTMEIQRLIARALRAAVDLKTLGEFTITLDCDVIQADGGTRTASITGACVALADALNKLVANGKLKTNPMKGMVAAVSVGIVNGEAICDLEYVEDSAAETDMNVVMTEDGRIIEVQGTAEGEPFSHEELLTLLSLARGGIESIVATQKAALEN</sequence>
<feature type="chain" id="PRO_1000129368" description="Ribonuclease PH">
    <location>
        <begin position="1"/>
        <end position="238"/>
    </location>
</feature>
<feature type="binding site" evidence="1">
    <location>
        <position position="86"/>
    </location>
    <ligand>
        <name>phosphate</name>
        <dbReference type="ChEBI" id="CHEBI:43474"/>
        <note>substrate</note>
    </ligand>
</feature>
<feature type="binding site" evidence="1">
    <location>
        <begin position="124"/>
        <end position="126"/>
    </location>
    <ligand>
        <name>phosphate</name>
        <dbReference type="ChEBI" id="CHEBI:43474"/>
        <note>substrate</note>
    </ligand>
</feature>
<dbReference type="EC" id="2.7.7.56" evidence="1"/>
<dbReference type="EMBL" id="AM933173">
    <property type="protein sequence ID" value="CAR39477.1"/>
    <property type="molecule type" value="Genomic_DNA"/>
</dbReference>
<dbReference type="RefSeq" id="WP_001247080.1">
    <property type="nucleotide sequence ID" value="NC_011274.1"/>
</dbReference>
<dbReference type="SMR" id="B5RG80"/>
<dbReference type="KEGG" id="seg:SG3697"/>
<dbReference type="HOGENOM" id="CLU_050858_0_0_6"/>
<dbReference type="Proteomes" id="UP000008321">
    <property type="component" value="Chromosome"/>
</dbReference>
<dbReference type="GO" id="GO:0000175">
    <property type="term" value="F:3'-5'-RNA exonuclease activity"/>
    <property type="evidence" value="ECO:0007669"/>
    <property type="project" value="UniProtKB-UniRule"/>
</dbReference>
<dbReference type="GO" id="GO:0000049">
    <property type="term" value="F:tRNA binding"/>
    <property type="evidence" value="ECO:0007669"/>
    <property type="project" value="UniProtKB-UniRule"/>
</dbReference>
<dbReference type="GO" id="GO:0009022">
    <property type="term" value="F:tRNA nucleotidyltransferase activity"/>
    <property type="evidence" value="ECO:0007669"/>
    <property type="project" value="UniProtKB-UniRule"/>
</dbReference>
<dbReference type="GO" id="GO:0016075">
    <property type="term" value="P:rRNA catabolic process"/>
    <property type="evidence" value="ECO:0007669"/>
    <property type="project" value="UniProtKB-UniRule"/>
</dbReference>
<dbReference type="GO" id="GO:0006364">
    <property type="term" value="P:rRNA processing"/>
    <property type="evidence" value="ECO:0007669"/>
    <property type="project" value="UniProtKB-KW"/>
</dbReference>
<dbReference type="GO" id="GO:0008033">
    <property type="term" value="P:tRNA processing"/>
    <property type="evidence" value="ECO:0007669"/>
    <property type="project" value="UniProtKB-UniRule"/>
</dbReference>
<dbReference type="CDD" id="cd11362">
    <property type="entry name" value="RNase_PH_bact"/>
    <property type="match status" value="1"/>
</dbReference>
<dbReference type="FunFam" id="3.30.230.70:FF:000003">
    <property type="entry name" value="Ribonuclease PH"/>
    <property type="match status" value="1"/>
</dbReference>
<dbReference type="Gene3D" id="3.30.230.70">
    <property type="entry name" value="GHMP Kinase, N-terminal domain"/>
    <property type="match status" value="1"/>
</dbReference>
<dbReference type="HAMAP" id="MF_00564">
    <property type="entry name" value="RNase_PH"/>
    <property type="match status" value="1"/>
</dbReference>
<dbReference type="InterPro" id="IPR001247">
    <property type="entry name" value="ExoRNase_PH_dom1"/>
</dbReference>
<dbReference type="InterPro" id="IPR015847">
    <property type="entry name" value="ExoRNase_PH_dom2"/>
</dbReference>
<dbReference type="InterPro" id="IPR036345">
    <property type="entry name" value="ExoRNase_PH_dom2_sf"/>
</dbReference>
<dbReference type="InterPro" id="IPR027408">
    <property type="entry name" value="PNPase/RNase_PH_dom_sf"/>
</dbReference>
<dbReference type="InterPro" id="IPR020568">
    <property type="entry name" value="Ribosomal_Su5_D2-typ_SF"/>
</dbReference>
<dbReference type="InterPro" id="IPR050080">
    <property type="entry name" value="RNase_PH"/>
</dbReference>
<dbReference type="InterPro" id="IPR002381">
    <property type="entry name" value="RNase_PH_bac-type"/>
</dbReference>
<dbReference type="InterPro" id="IPR018336">
    <property type="entry name" value="RNase_PH_CS"/>
</dbReference>
<dbReference type="NCBIfam" id="TIGR01966">
    <property type="entry name" value="RNasePH"/>
    <property type="match status" value="1"/>
</dbReference>
<dbReference type="PANTHER" id="PTHR11953">
    <property type="entry name" value="EXOSOME COMPLEX COMPONENT"/>
    <property type="match status" value="1"/>
</dbReference>
<dbReference type="PANTHER" id="PTHR11953:SF0">
    <property type="entry name" value="EXOSOME COMPLEX COMPONENT RRP41"/>
    <property type="match status" value="1"/>
</dbReference>
<dbReference type="Pfam" id="PF01138">
    <property type="entry name" value="RNase_PH"/>
    <property type="match status" value="1"/>
</dbReference>
<dbReference type="Pfam" id="PF03725">
    <property type="entry name" value="RNase_PH_C"/>
    <property type="match status" value="1"/>
</dbReference>
<dbReference type="SUPFAM" id="SSF55666">
    <property type="entry name" value="Ribonuclease PH domain 2-like"/>
    <property type="match status" value="1"/>
</dbReference>
<dbReference type="SUPFAM" id="SSF54211">
    <property type="entry name" value="Ribosomal protein S5 domain 2-like"/>
    <property type="match status" value="1"/>
</dbReference>
<dbReference type="PROSITE" id="PS01277">
    <property type="entry name" value="RIBONUCLEASE_PH"/>
    <property type="match status" value="1"/>
</dbReference>
<keyword id="KW-0548">Nucleotidyltransferase</keyword>
<keyword id="KW-0694">RNA-binding</keyword>
<keyword id="KW-0698">rRNA processing</keyword>
<keyword id="KW-0808">Transferase</keyword>
<keyword id="KW-0819">tRNA processing</keyword>
<keyword id="KW-0820">tRNA-binding</keyword>
<accession>B5RG80</accession>
<organism>
    <name type="scientific">Salmonella gallinarum (strain 287/91 / NCTC 13346)</name>
    <dbReference type="NCBI Taxonomy" id="550538"/>
    <lineage>
        <taxon>Bacteria</taxon>
        <taxon>Pseudomonadati</taxon>
        <taxon>Pseudomonadota</taxon>
        <taxon>Gammaproteobacteria</taxon>
        <taxon>Enterobacterales</taxon>
        <taxon>Enterobacteriaceae</taxon>
        <taxon>Salmonella</taxon>
    </lineage>
</organism>